<sequence>MNNNIMNLIAAIVLSLSIIFGWQYFVVKPEHKKQQQQIAMQKAENLKKQKLKALIKPASDLVVQEANQVQRIKIESESLTGSISLKGLRFDDLILKKYKQDLSKNSTEVRLFSPANTENAYFAEIGLVSNLSSVKLPNNDTIWNSDGEILSPEKPVNLFWVNEDGVKFLVTITLDENYLFTVEQTIVNNSDKELPVQSYGLINRKYIAVEKAVNILHQGPIGCINENLKEYSYDDIKDKKSEKFVASKVDWIGMTDKYWLSSLIPDKSSNYSSNFNYALTQGVERYQVDFISPVQIIKSGENFSITSRIFAGAKKVDLLDKYEKQYGIKLFDRAIDFGWFYIITKPVFYAMNFFYGYVGNFGISILIVTVIIKLLMFTLANKSYCSMKKMKNLQPEIDRIKNLYGDDKARLNQEIMALYKKEKVNPVAGCLPILVQIPVFFSIYKVLYVTIEMRQAPFYGWIKDLSAPDPTTIFNLFGFLPFSPPSFLMIGAWPILMAITMFLQQRMSPEPADPVQAQVMKFMPLIFLVMFSSFPVGLLIYWSWNNILSIIQQYYINKFN</sequence>
<organism>
    <name type="scientific">Rickettsia canadensis (strain McKiel)</name>
    <dbReference type="NCBI Taxonomy" id="293613"/>
    <lineage>
        <taxon>Bacteria</taxon>
        <taxon>Pseudomonadati</taxon>
        <taxon>Pseudomonadota</taxon>
        <taxon>Alphaproteobacteria</taxon>
        <taxon>Rickettsiales</taxon>
        <taxon>Rickettsiaceae</taxon>
        <taxon>Rickettsieae</taxon>
        <taxon>Rickettsia</taxon>
        <taxon>belli group</taxon>
    </lineage>
</organism>
<keyword id="KW-0997">Cell inner membrane</keyword>
<keyword id="KW-1003">Cell membrane</keyword>
<keyword id="KW-0143">Chaperone</keyword>
<keyword id="KW-0472">Membrane</keyword>
<keyword id="KW-0653">Protein transport</keyword>
<keyword id="KW-0812">Transmembrane</keyword>
<keyword id="KW-1133">Transmembrane helix</keyword>
<keyword id="KW-0813">Transport</keyword>
<gene>
    <name evidence="1" type="primary">yidC</name>
    <name type="ordered locus">A1E_00230</name>
</gene>
<name>YIDC_RICCK</name>
<accession>A8EXB6</accession>
<protein>
    <recommendedName>
        <fullName evidence="1">Membrane protein insertase YidC</fullName>
    </recommendedName>
    <alternativeName>
        <fullName evidence="1">Foldase YidC</fullName>
    </alternativeName>
    <alternativeName>
        <fullName evidence="1">Membrane integrase YidC</fullName>
    </alternativeName>
    <alternativeName>
        <fullName evidence="1">Membrane protein YidC</fullName>
    </alternativeName>
</protein>
<proteinExistence type="inferred from homology"/>
<dbReference type="EMBL" id="CP000409">
    <property type="protein sequence ID" value="ABV72999.1"/>
    <property type="molecule type" value="Genomic_DNA"/>
</dbReference>
<dbReference type="RefSeq" id="WP_012148200.1">
    <property type="nucleotide sequence ID" value="NC_009879.1"/>
</dbReference>
<dbReference type="SMR" id="A8EXB6"/>
<dbReference type="STRING" id="293613.A1E_00230"/>
<dbReference type="KEGG" id="rcm:A1E_00230"/>
<dbReference type="eggNOG" id="COG0706">
    <property type="taxonomic scope" value="Bacteria"/>
</dbReference>
<dbReference type="HOGENOM" id="CLU_016535_1_0_5"/>
<dbReference type="Proteomes" id="UP000007056">
    <property type="component" value="Chromosome"/>
</dbReference>
<dbReference type="GO" id="GO:0005886">
    <property type="term" value="C:plasma membrane"/>
    <property type="evidence" value="ECO:0007669"/>
    <property type="project" value="UniProtKB-SubCell"/>
</dbReference>
<dbReference type="GO" id="GO:0032977">
    <property type="term" value="F:membrane insertase activity"/>
    <property type="evidence" value="ECO:0007669"/>
    <property type="project" value="InterPro"/>
</dbReference>
<dbReference type="GO" id="GO:0051205">
    <property type="term" value="P:protein insertion into membrane"/>
    <property type="evidence" value="ECO:0007669"/>
    <property type="project" value="TreeGrafter"/>
</dbReference>
<dbReference type="GO" id="GO:0015031">
    <property type="term" value="P:protein transport"/>
    <property type="evidence" value="ECO:0007669"/>
    <property type="project" value="UniProtKB-KW"/>
</dbReference>
<dbReference type="CDD" id="cd20070">
    <property type="entry name" value="5TM_YidC_Alb3"/>
    <property type="match status" value="1"/>
</dbReference>
<dbReference type="CDD" id="cd19961">
    <property type="entry name" value="EcYidC-like_peri"/>
    <property type="match status" value="1"/>
</dbReference>
<dbReference type="Gene3D" id="2.70.98.90">
    <property type="match status" value="1"/>
</dbReference>
<dbReference type="HAMAP" id="MF_01810">
    <property type="entry name" value="YidC_type1"/>
    <property type="match status" value="1"/>
</dbReference>
<dbReference type="InterPro" id="IPR019998">
    <property type="entry name" value="Membr_insert_YidC"/>
</dbReference>
<dbReference type="InterPro" id="IPR028053">
    <property type="entry name" value="Membr_insert_YidC_N"/>
</dbReference>
<dbReference type="InterPro" id="IPR001708">
    <property type="entry name" value="YidC/ALB3/OXA1/COX18"/>
</dbReference>
<dbReference type="InterPro" id="IPR028055">
    <property type="entry name" value="YidC/Oxa/ALB_C"/>
</dbReference>
<dbReference type="InterPro" id="IPR047196">
    <property type="entry name" value="YidC_ALB_C"/>
</dbReference>
<dbReference type="InterPro" id="IPR038221">
    <property type="entry name" value="YidC_periplasmic_sf"/>
</dbReference>
<dbReference type="NCBIfam" id="NF002353">
    <property type="entry name" value="PRK01318.1-4"/>
    <property type="match status" value="1"/>
</dbReference>
<dbReference type="NCBIfam" id="TIGR03593">
    <property type="entry name" value="yidC_nterm"/>
    <property type="match status" value="1"/>
</dbReference>
<dbReference type="NCBIfam" id="TIGR03592">
    <property type="entry name" value="yidC_oxa1_cterm"/>
    <property type="match status" value="1"/>
</dbReference>
<dbReference type="PANTHER" id="PTHR12428:SF65">
    <property type="entry name" value="CYTOCHROME C OXIDASE ASSEMBLY PROTEIN COX18, MITOCHONDRIAL"/>
    <property type="match status" value="1"/>
</dbReference>
<dbReference type="PANTHER" id="PTHR12428">
    <property type="entry name" value="OXA1"/>
    <property type="match status" value="1"/>
</dbReference>
<dbReference type="Pfam" id="PF02096">
    <property type="entry name" value="60KD_IMP"/>
    <property type="match status" value="1"/>
</dbReference>
<dbReference type="Pfam" id="PF14849">
    <property type="entry name" value="YidC_periplas"/>
    <property type="match status" value="1"/>
</dbReference>
<dbReference type="PRINTS" id="PR00701">
    <property type="entry name" value="60KDINNERMP"/>
</dbReference>
<dbReference type="PRINTS" id="PR01900">
    <property type="entry name" value="YIDCPROTEIN"/>
</dbReference>
<reference key="1">
    <citation type="submission" date="2007-09" db="EMBL/GenBank/DDBJ databases">
        <title>Complete genome sequence of Rickettsia canadensis.</title>
        <authorList>
            <person name="Madan A."/>
            <person name="Fahey J."/>
            <person name="Helton E."/>
            <person name="Ketteman M."/>
            <person name="Madan A."/>
            <person name="Rodrigues S."/>
            <person name="Sanchez A."/>
            <person name="Whiting M."/>
            <person name="Dasch G."/>
            <person name="Eremeeva M."/>
        </authorList>
    </citation>
    <scope>NUCLEOTIDE SEQUENCE [LARGE SCALE GENOMIC DNA]</scope>
    <source>
        <strain>McKiel</strain>
    </source>
</reference>
<evidence type="ECO:0000255" key="1">
    <source>
        <dbReference type="HAMAP-Rule" id="MF_01810"/>
    </source>
</evidence>
<comment type="function">
    <text evidence="1">Required for the insertion and/or proper folding and/or complex formation of integral membrane proteins into the membrane. Involved in integration of membrane proteins that insert both dependently and independently of the Sec translocase complex, as well as at least some lipoproteins. Aids folding of multispanning membrane proteins.</text>
</comment>
<comment type="subunit">
    <text evidence="1">Interacts with the Sec translocase complex via SecD. Specifically interacts with transmembrane segments of nascent integral membrane proteins during membrane integration.</text>
</comment>
<comment type="subcellular location">
    <subcellularLocation>
        <location evidence="1">Cell inner membrane</location>
        <topology evidence="1">Multi-pass membrane protein</topology>
    </subcellularLocation>
</comment>
<comment type="similarity">
    <text evidence="1">Belongs to the OXA1/ALB3/YidC family. Type 1 subfamily.</text>
</comment>
<feature type="chain" id="PRO_1000070156" description="Membrane protein insertase YidC">
    <location>
        <begin position="1"/>
        <end position="560"/>
    </location>
</feature>
<feature type="transmembrane region" description="Helical" evidence="1">
    <location>
        <begin position="7"/>
        <end position="27"/>
    </location>
</feature>
<feature type="transmembrane region" description="Helical" evidence="1">
    <location>
        <begin position="334"/>
        <end position="354"/>
    </location>
</feature>
<feature type="transmembrane region" description="Helical" evidence="1">
    <location>
        <begin position="357"/>
        <end position="377"/>
    </location>
</feature>
<feature type="transmembrane region" description="Helical" evidence="1">
    <location>
        <begin position="431"/>
        <end position="451"/>
    </location>
</feature>
<feature type="transmembrane region" description="Helical" evidence="1">
    <location>
        <begin position="476"/>
        <end position="496"/>
    </location>
</feature>
<feature type="transmembrane region" description="Helical" evidence="1">
    <location>
        <begin position="522"/>
        <end position="542"/>
    </location>
</feature>